<reference key="1">
    <citation type="journal article" date="2000" name="Genome Res.">
        <title>Identification of novel human genes evolutionarily conserved in Caenorhabditis elegans by comparative proteomics.</title>
        <authorList>
            <person name="Lai C.-H."/>
            <person name="Chou C.-Y."/>
            <person name="Ch'ang L.-Y."/>
            <person name="Liu C.-S."/>
            <person name="Lin W.-C."/>
        </authorList>
    </citation>
    <scope>NUCLEOTIDE SEQUENCE [LARGE SCALE MRNA]</scope>
    <scope>VARIANT GLU-55</scope>
</reference>
<reference key="2">
    <citation type="submission" date="2000-01" db="EMBL/GenBank/DDBJ databases">
        <title>A novel gene expressed in normal human pituitary.</title>
        <authorList>
            <person name="Song H."/>
            <person name="Gao G."/>
            <person name="Peng Y."/>
            <person name="Ren S."/>
            <person name="Chen Z."/>
            <person name="Han Z."/>
        </authorList>
    </citation>
    <scope>NUCLEOTIDE SEQUENCE [MRNA]</scope>
    <scope>VARIANT GLU-55</scope>
    <source>
        <tissue>Pituitary</tissue>
    </source>
</reference>
<reference key="3">
    <citation type="journal article" date="2007" name="BMC Genomics">
        <title>The full-ORF clone resource of the German cDNA consortium.</title>
        <authorList>
            <person name="Bechtel S."/>
            <person name="Rosenfelder H."/>
            <person name="Duda A."/>
            <person name="Schmidt C.P."/>
            <person name="Ernst U."/>
            <person name="Wellenreuther R."/>
            <person name="Mehrle A."/>
            <person name="Schuster C."/>
            <person name="Bahr A."/>
            <person name="Bloecker H."/>
            <person name="Heubner D."/>
            <person name="Hoerlein A."/>
            <person name="Michel G."/>
            <person name="Wedler H."/>
            <person name="Koehrer K."/>
            <person name="Ottenwaelder B."/>
            <person name="Poustka A."/>
            <person name="Wiemann S."/>
            <person name="Schupp I."/>
        </authorList>
    </citation>
    <scope>NUCLEOTIDE SEQUENCE [LARGE SCALE MRNA]</scope>
    <scope>VARIANT GLU-55</scope>
    <source>
        <tissue>Fetal kidney</tissue>
    </source>
</reference>
<reference key="4">
    <citation type="journal article" date="2004" name="Nat. Genet.">
        <title>Complete sequencing and characterization of 21,243 full-length human cDNAs.</title>
        <authorList>
            <person name="Ota T."/>
            <person name="Suzuki Y."/>
            <person name="Nishikawa T."/>
            <person name="Otsuki T."/>
            <person name="Sugiyama T."/>
            <person name="Irie R."/>
            <person name="Wakamatsu A."/>
            <person name="Hayashi K."/>
            <person name="Sato H."/>
            <person name="Nagai K."/>
            <person name="Kimura K."/>
            <person name="Makita H."/>
            <person name="Sekine M."/>
            <person name="Obayashi M."/>
            <person name="Nishi T."/>
            <person name="Shibahara T."/>
            <person name="Tanaka T."/>
            <person name="Ishii S."/>
            <person name="Yamamoto J."/>
            <person name="Saito K."/>
            <person name="Kawai Y."/>
            <person name="Isono Y."/>
            <person name="Nakamura Y."/>
            <person name="Nagahari K."/>
            <person name="Murakami K."/>
            <person name="Yasuda T."/>
            <person name="Iwayanagi T."/>
            <person name="Wagatsuma M."/>
            <person name="Shiratori A."/>
            <person name="Sudo H."/>
            <person name="Hosoiri T."/>
            <person name="Kaku Y."/>
            <person name="Kodaira H."/>
            <person name="Kondo H."/>
            <person name="Sugawara M."/>
            <person name="Takahashi M."/>
            <person name="Kanda K."/>
            <person name="Yokoi T."/>
            <person name="Furuya T."/>
            <person name="Kikkawa E."/>
            <person name="Omura Y."/>
            <person name="Abe K."/>
            <person name="Kamihara K."/>
            <person name="Katsuta N."/>
            <person name="Sato K."/>
            <person name="Tanikawa M."/>
            <person name="Yamazaki M."/>
            <person name="Ninomiya K."/>
            <person name="Ishibashi T."/>
            <person name="Yamashita H."/>
            <person name="Murakawa K."/>
            <person name="Fujimori K."/>
            <person name="Tanai H."/>
            <person name="Kimata M."/>
            <person name="Watanabe M."/>
            <person name="Hiraoka S."/>
            <person name="Chiba Y."/>
            <person name="Ishida S."/>
            <person name="Ono Y."/>
            <person name="Takiguchi S."/>
            <person name="Watanabe S."/>
            <person name="Yosida M."/>
            <person name="Hotuta T."/>
            <person name="Kusano J."/>
            <person name="Kanehori K."/>
            <person name="Takahashi-Fujii A."/>
            <person name="Hara H."/>
            <person name="Tanase T.-O."/>
            <person name="Nomura Y."/>
            <person name="Togiya S."/>
            <person name="Komai F."/>
            <person name="Hara R."/>
            <person name="Takeuchi K."/>
            <person name="Arita M."/>
            <person name="Imose N."/>
            <person name="Musashino K."/>
            <person name="Yuuki H."/>
            <person name="Oshima A."/>
            <person name="Sasaki N."/>
            <person name="Aotsuka S."/>
            <person name="Yoshikawa Y."/>
            <person name="Matsunawa H."/>
            <person name="Ichihara T."/>
            <person name="Shiohata N."/>
            <person name="Sano S."/>
            <person name="Moriya S."/>
            <person name="Momiyama H."/>
            <person name="Satoh N."/>
            <person name="Takami S."/>
            <person name="Terashima Y."/>
            <person name="Suzuki O."/>
            <person name="Nakagawa S."/>
            <person name="Senoh A."/>
            <person name="Mizoguchi H."/>
            <person name="Goto Y."/>
            <person name="Shimizu F."/>
            <person name="Wakebe H."/>
            <person name="Hishigaki H."/>
            <person name="Watanabe T."/>
            <person name="Sugiyama A."/>
            <person name="Takemoto M."/>
            <person name="Kawakami B."/>
            <person name="Yamazaki M."/>
            <person name="Watanabe K."/>
            <person name="Kumagai A."/>
            <person name="Itakura S."/>
            <person name="Fukuzumi Y."/>
            <person name="Fujimori Y."/>
            <person name="Komiyama M."/>
            <person name="Tashiro H."/>
            <person name="Tanigami A."/>
            <person name="Fujiwara T."/>
            <person name="Ono T."/>
            <person name="Yamada K."/>
            <person name="Fujii Y."/>
            <person name="Ozaki K."/>
            <person name="Hirao M."/>
            <person name="Ohmori Y."/>
            <person name="Kawabata A."/>
            <person name="Hikiji T."/>
            <person name="Kobatake N."/>
            <person name="Inagaki H."/>
            <person name="Ikema Y."/>
            <person name="Okamoto S."/>
            <person name="Okitani R."/>
            <person name="Kawakami T."/>
            <person name="Noguchi S."/>
            <person name="Itoh T."/>
            <person name="Shigeta K."/>
            <person name="Senba T."/>
            <person name="Matsumura K."/>
            <person name="Nakajima Y."/>
            <person name="Mizuno T."/>
            <person name="Morinaga M."/>
            <person name="Sasaki M."/>
            <person name="Togashi T."/>
            <person name="Oyama M."/>
            <person name="Hata H."/>
            <person name="Watanabe M."/>
            <person name="Komatsu T."/>
            <person name="Mizushima-Sugano J."/>
            <person name="Satoh T."/>
            <person name="Shirai Y."/>
            <person name="Takahashi Y."/>
            <person name="Nakagawa K."/>
            <person name="Okumura K."/>
            <person name="Nagase T."/>
            <person name="Nomura N."/>
            <person name="Kikuchi H."/>
            <person name="Masuho Y."/>
            <person name="Yamashita R."/>
            <person name="Nakai K."/>
            <person name="Yada T."/>
            <person name="Nakamura Y."/>
            <person name="Ohara O."/>
            <person name="Isogai T."/>
            <person name="Sugano S."/>
        </authorList>
    </citation>
    <scope>NUCLEOTIDE SEQUENCE [LARGE SCALE MRNA]</scope>
    <scope>VARIANT GLU-55</scope>
    <source>
        <tissue>Kidney</tissue>
    </source>
</reference>
<reference key="5">
    <citation type="journal article" date="2006" name="Nature">
        <title>DNA sequence of human chromosome 17 and analysis of rearrangement in the human lineage.</title>
        <authorList>
            <person name="Zody M.C."/>
            <person name="Garber M."/>
            <person name="Adams D.J."/>
            <person name="Sharpe T."/>
            <person name="Harrow J."/>
            <person name="Lupski J.R."/>
            <person name="Nicholson C."/>
            <person name="Searle S.M."/>
            <person name="Wilming L."/>
            <person name="Young S.K."/>
            <person name="Abouelleil A."/>
            <person name="Allen N.R."/>
            <person name="Bi W."/>
            <person name="Bloom T."/>
            <person name="Borowsky M.L."/>
            <person name="Bugalter B.E."/>
            <person name="Butler J."/>
            <person name="Chang J.L."/>
            <person name="Chen C.-K."/>
            <person name="Cook A."/>
            <person name="Corum B."/>
            <person name="Cuomo C.A."/>
            <person name="de Jong P.J."/>
            <person name="DeCaprio D."/>
            <person name="Dewar K."/>
            <person name="FitzGerald M."/>
            <person name="Gilbert J."/>
            <person name="Gibson R."/>
            <person name="Gnerre S."/>
            <person name="Goldstein S."/>
            <person name="Grafham D.V."/>
            <person name="Grocock R."/>
            <person name="Hafez N."/>
            <person name="Hagopian D.S."/>
            <person name="Hart E."/>
            <person name="Norman C.H."/>
            <person name="Humphray S."/>
            <person name="Jaffe D.B."/>
            <person name="Jones M."/>
            <person name="Kamal M."/>
            <person name="Khodiyar V.K."/>
            <person name="LaButti K."/>
            <person name="Laird G."/>
            <person name="Lehoczky J."/>
            <person name="Liu X."/>
            <person name="Lokyitsang T."/>
            <person name="Loveland J."/>
            <person name="Lui A."/>
            <person name="Macdonald P."/>
            <person name="Major J.E."/>
            <person name="Matthews L."/>
            <person name="Mauceli E."/>
            <person name="McCarroll S.A."/>
            <person name="Mihalev A.H."/>
            <person name="Mudge J."/>
            <person name="Nguyen C."/>
            <person name="Nicol R."/>
            <person name="O'Leary S.B."/>
            <person name="Osoegawa K."/>
            <person name="Schwartz D.C."/>
            <person name="Shaw-Smith C."/>
            <person name="Stankiewicz P."/>
            <person name="Steward C."/>
            <person name="Swarbreck D."/>
            <person name="Venkataraman V."/>
            <person name="Whittaker C.A."/>
            <person name="Yang X."/>
            <person name="Zimmer A.R."/>
            <person name="Bradley A."/>
            <person name="Hubbard T."/>
            <person name="Birren B.W."/>
            <person name="Rogers J."/>
            <person name="Lander E.S."/>
            <person name="Nusbaum C."/>
        </authorList>
    </citation>
    <scope>NUCLEOTIDE SEQUENCE [LARGE SCALE GENOMIC DNA]</scope>
</reference>
<reference key="6">
    <citation type="journal article" date="2004" name="Genome Res.">
        <title>The status, quality, and expansion of the NIH full-length cDNA project: the Mammalian Gene Collection (MGC).</title>
        <authorList>
            <consortium name="The MGC Project Team"/>
        </authorList>
    </citation>
    <scope>NUCLEOTIDE SEQUENCE [LARGE SCALE MRNA]</scope>
    <source>
        <tissue>Skeletal muscle</tissue>
    </source>
</reference>
<reference key="7">
    <citation type="journal article" date="2009" name="Anal. Chem.">
        <title>Lys-N and trypsin cover complementary parts of the phosphoproteome in a refined SCX-based approach.</title>
        <authorList>
            <person name="Gauci S."/>
            <person name="Helbig A.O."/>
            <person name="Slijper M."/>
            <person name="Krijgsveld J."/>
            <person name="Heck A.J."/>
            <person name="Mohammed S."/>
        </authorList>
    </citation>
    <scope>ACETYLATION [LARGE SCALE ANALYSIS] AT MET-1</scope>
    <scope>IDENTIFICATION BY MASS SPECTROMETRY [LARGE SCALE ANALYSIS]</scope>
</reference>
<feature type="chain" id="PRO_0000212828" description="Golgi apparatus membrane protein TVP23 homolog B">
    <location>
        <begin position="1"/>
        <end position="205"/>
    </location>
</feature>
<feature type="transmembrane region" description="Helical" evidence="1">
    <location>
        <begin position="34"/>
        <end position="53"/>
    </location>
</feature>
<feature type="transmembrane region" description="Helical" evidence="1">
    <location>
        <begin position="54"/>
        <end position="72"/>
    </location>
</feature>
<feature type="transmembrane region" description="Helical" evidence="1">
    <location>
        <begin position="126"/>
        <end position="146"/>
    </location>
</feature>
<feature type="transmembrane region" description="Helical" evidence="1">
    <location>
        <begin position="152"/>
        <end position="172"/>
    </location>
</feature>
<feature type="region of interest" description="Disordered" evidence="2">
    <location>
        <begin position="1"/>
        <end position="21"/>
    </location>
</feature>
<feature type="modified residue" description="N-acetylmethionine" evidence="8">
    <location>
        <position position="1"/>
    </location>
</feature>
<feature type="sequence variant" id="VAR_060476" description="In dbSNP:rs61075345." evidence="3 4 5 6">
    <original>G</original>
    <variation>E</variation>
    <location>
        <position position="55"/>
    </location>
</feature>
<feature type="sequence conflict" description="In Ref. 4; BAF83502." evidence="7" ref="4">
    <original>I</original>
    <variation>T</variation>
    <location>
        <position position="48"/>
    </location>
</feature>
<proteinExistence type="evidence at protein level"/>
<sequence length="205" mass="23576">MLQQDSNDDTEDVSLFDAEEETTNRPRKAKIRHPVASFFHLFFRVSAIIVYLLCGLLSSSFITCMVTIILLLSCDFWAVKNVTGRLMVGLRWWNHIDEDGKSHWVFESRKESSQENKTVSEAESRIFWLGLIACPVLWVIFAFSALFSFRVKWLAVVIMGVVLQGANLYGYIRCKVRSRKHLTSMATSYFGKQFLRQNTGDDQTS</sequence>
<evidence type="ECO:0000255" key="1"/>
<evidence type="ECO:0000256" key="2">
    <source>
        <dbReference type="SAM" id="MobiDB-lite"/>
    </source>
</evidence>
<evidence type="ECO:0000269" key="3">
    <source>
    </source>
</evidence>
<evidence type="ECO:0000269" key="4">
    <source>
    </source>
</evidence>
<evidence type="ECO:0000269" key="5">
    <source>
    </source>
</evidence>
<evidence type="ECO:0000269" key="6">
    <source ref="2"/>
</evidence>
<evidence type="ECO:0000305" key="7"/>
<evidence type="ECO:0007744" key="8">
    <source>
    </source>
</evidence>
<comment type="interaction">
    <interactant intactId="EBI-11343401">
        <id>Q9NYZ1</id>
    </interactant>
    <interactant intactId="EBI-3916106">
        <id>Q9BV23</id>
        <label>ABHD6</label>
    </interactant>
    <organismsDiffer>false</organismsDiffer>
    <experiments>3</experiments>
</comment>
<comment type="interaction">
    <interactant intactId="EBI-11343401">
        <id>Q9NYZ1</id>
    </interactant>
    <interactant intactId="EBI-741885">
        <id>Q96LK0</id>
        <label>CEP19</label>
    </interactant>
    <organismsDiffer>false</organismsDiffer>
    <experiments>3</experiments>
</comment>
<comment type="interaction">
    <interactant intactId="EBI-11343401">
        <id>Q9NYZ1</id>
    </interactant>
    <interactant intactId="EBI-1052304">
        <id>Q8NBQ5</id>
        <label>HSD17B11</label>
    </interactant>
    <organismsDiffer>false</organismsDiffer>
    <experiments>3</experiments>
</comment>
<comment type="interaction">
    <interactant intactId="EBI-11343401">
        <id>Q9NYZ1</id>
    </interactant>
    <interactant intactId="EBI-741171">
        <id>Q96AL5</id>
        <label>PBX3</label>
    </interactant>
    <organismsDiffer>false</organismsDiffer>
    <experiments>3</experiments>
</comment>
<comment type="interaction">
    <interactant intactId="EBI-11343401">
        <id>Q9NYZ1</id>
    </interactant>
    <interactant intactId="EBI-7545592">
        <id>Q9H6H4</id>
        <label>REEP4</label>
    </interactant>
    <organismsDiffer>false</organismsDiffer>
    <experiments>3</experiments>
</comment>
<comment type="interaction">
    <interactant intactId="EBI-11343401">
        <id>Q9NYZ1</id>
    </interactant>
    <interactant intactId="EBI-17247926">
        <id>Q9NY72</id>
        <label>SCN3B</label>
    </interactant>
    <organismsDiffer>false</organismsDiffer>
    <experiments>3</experiments>
</comment>
<comment type="interaction">
    <interactant intactId="EBI-11343401">
        <id>Q9NYZ1</id>
    </interactant>
    <interactant intactId="EBI-13369834">
        <id>Q8N114-3</id>
        <label>SHISA5</label>
    </interactant>
    <organismsDiffer>false</organismsDiffer>
    <experiments>3</experiments>
</comment>
<comment type="interaction">
    <interactant intactId="EBI-11343401">
        <id>Q9NYZ1</id>
    </interactant>
    <interactant intactId="EBI-3923031">
        <id>Q14973</id>
        <label>SLC10A1</label>
    </interactant>
    <organismsDiffer>false</organismsDiffer>
    <experiments>3</experiments>
</comment>
<comment type="interaction">
    <interactant intactId="EBI-11343401">
        <id>Q9NYZ1</id>
    </interactant>
    <interactant intactId="EBI-18159983">
        <id>Q3KNW5</id>
        <label>SLC10A6</label>
    </interactant>
    <organismsDiffer>false</organismsDiffer>
    <experiments>3</experiments>
</comment>
<comment type="interaction">
    <interactant intactId="EBI-11343401">
        <id>Q9NYZ1</id>
    </interactant>
    <interactant intactId="EBI-17295964">
        <id>Q9NQQ7-3</id>
        <label>SLC35C2</label>
    </interactant>
    <organismsDiffer>false</organismsDiffer>
    <experiments>3</experiments>
</comment>
<comment type="interaction">
    <interactant intactId="EBI-11343401">
        <id>Q9NYZ1</id>
    </interactant>
    <interactant intactId="EBI-10238936">
        <id>Q17RD7</id>
        <label>SYT16</label>
    </interactant>
    <organismsDiffer>false</organismsDiffer>
    <experiments>3</experiments>
</comment>
<comment type="interaction">
    <interactant intactId="EBI-11343401">
        <id>Q9NYZ1</id>
    </interactant>
    <interactant intactId="EBI-6268651">
        <id>Q9NPL8</id>
        <label>TIMMDC1</label>
    </interactant>
    <organismsDiffer>false</organismsDiffer>
    <experiments>3</experiments>
</comment>
<comment type="interaction">
    <interactant intactId="EBI-11343401">
        <id>Q9NYZ1</id>
    </interactant>
    <interactant intactId="EBI-12947623">
        <id>Q96MV1</id>
        <label>TLCD4</label>
    </interactant>
    <organismsDiffer>false</organismsDiffer>
    <experiments>3</experiments>
</comment>
<comment type="interaction">
    <interactant intactId="EBI-11343401">
        <id>Q9NYZ1</id>
    </interactant>
    <interactant intactId="EBI-8638294">
        <id>Q9NUH8</id>
        <label>TMEM14B</label>
    </interactant>
    <organismsDiffer>false</organismsDiffer>
    <experiments>3</experiments>
</comment>
<comment type="interaction">
    <interactant intactId="EBI-11343401">
        <id>Q9NYZ1</id>
    </interactant>
    <interactant intactId="EBI-11742770">
        <id>Q96HE8</id>
        <label>TMEM80</label>
    </interactant>
    <organismsDiffer>false</organismsDiffer>
    <experiments>3</experiments>
</comment>
<comment type="interaction">
    <interactant intactId="EBI-11343401">
        <id>Q9NYZ1</id>
    </interactant>
    <interactant intactId="EBI-6447886">
        <id>Q9Y320</id>
        <label>TMX2</label>
    </interactant>
    <organismsDiffer>false</organismsDiffer>
    <experiments>3</experiments>
</comment>
<comment type="interaction">
    <interactant intactId="EBI-11343401">
        <id>Q9NYZ1</id>
    </interactant>
    <interactant intactId="EBI-7850136">
        <id>Q9Y548</id>
        <label>YIPF1</label>
    </interactant>
    <organismsDiffer>false</organismsDiffer>
    <experiments>3</experiments>
</comment>
<comment type="interaction">
    <interactant intactId="EBI-11343401">
        <id>Q9NYZ1</id>
    </interactant>
    <interactant intactId="EBI-751204">
        <id>Q9BWQ6</id>
        <label>YIPF2</label>
    </interactant>
    <organismsDiffer>false</organismsDiffer>
    <experiments>3</experiments>
</comment>
<comment type="interaction">
    <interactant intactId="EBI-11343401">
        <id>Q9NYZ1</id>
    </interactant>
    <interactant intactId="EBI-751253">
        <id>Q9BSR8</id>
        <label>YIPF4</label>
    </interactant>
    <organismsDiffer>false</organismsDiffer>
    <experiments>3</experiments>
</comment>
<comment type="interaction">
    <interactant intactId="EBI-11343401">
        <id>Q9NYZ1</id>
    </interactant>
    <interactant intactId="EBI-751210">
        <id>Q96EC8</id>
        <label>YIPF6</label>
    </interactant>
    <organismsDiffer>false</organismsDiffer>
    <experiments>6</experiments>
</comment>
<comment type="subcellular location">
    <subcellularLocation>
        <location evidence="7">Membrane</location>
        <topology evidence="7">Multi-pass membrane protein</topology>
    </subcellularLocation>
</comment>
<comment type="similarity">
    <text evidence="7">Belongs to the TVP23 family.</text>
</comment>
<comment type="sequence caution" evidence="7">
    <conflict type="frameshift">
        <sequence resource="EMBL-CDS" id="AAD34143"/>
    </conflict>
</comment>
<gene>
    <name type="primary">TVP23B</name>
    <name type="synonym">FAM18B</name>
    <name type="synonym">FAM18B1</name>
    <name type="ORF">CGI-148</name>
    <name type="ORF">NPD008</name>
</gene>
<name>TV23B_HUMAN</name>
<keyword id="KW-0007">Acetylation</keyword>
<keyword id="KW-0472">Membrane</keyword>
<keyword id="KW-1267">Proteomics identification</keyword>
<keyword id="KW-1185">Reference proteome</keyword>
<keyword id="KW-0812">Transmembrane</keyword>
<keyword id="KW-1133">Transmembrane helix</keyword>
<accession>Q9NYZ1</accession>
<accession>A8K448</accession>
<accession>Q96HK5</accession>
<accession>Q9Y3E6</accession>
<dbReference type="EMBL" id="AF151906">
    <property type="protein sequence ID" value="AAD34143.1"/>
    <property type="status" value="ALT_FRAME"/>
    <property type="molecule type" value="mRNA"/>
</dbReference>
<dbReference type="EMBL" id="AF223467">
    <property type="protein sequence ID" value="AAF64142.1"/>
    <property type="molecule type" value="mRNA"/>
</dbReference>
<dbReference type="EMBL" id="BX537929">
    <property type="protein sequence ID" value="CAD97906.1"/>
    <property type="molecule type" value="mRNA"/>
</dbReference>
<dbReference type="EMBL" id="AK290813">
    <property type="protein sequence ID" value="BAF83502.1"/>
    <property type="molecule type" value="mRNA"/>
</dbReference>
<dbReference type="EMBL" id="AC107982">
    <property type="status" value="NOT_ANNOTATED_CDS"/>
    <property type="molecule type" value="Genomic_DNA"/>
</dbReference>
<dbReference type="EMBL" id="BC008430">
    <property type="protein sequence ID" value="AAH08430.1"/>
    <property type="molecule type" value="mRNA"/>
</dbReference>
<dbReference type="CCDS" id="CCDS42274.1"/>
<dbReference type="RefSeq" id="NP_001303848.1">
    <property type="nucleotide sequence ID" value="NM_001316919.1"/>
</dbReference>
<dbReference type="RefSeq" id="NP_001303849.1">
    <property type="nucleotide sequence ID" value="NM_001316920.1"/>
</dbReference>
<dbReference type="RefSeq" id="NP_001303850.1">
    <property type="nucleotide sequence ID" value="NM_001316921.1"/>
</dbReference>
<dbReference type="RefSeq" id="NP_001303851.1">
    <property type="nucleotide sequence ID" value="NM_001316922.1"/>
</dbReference>
<dbReference type="RefSeq" id="NP_001303852.1">
    <property type="nucleotide sequence ID" value="NM_001316923.1"/>
</dbReference>
<dbReference type="RefSeq" id="NP_001303853.1">
    <property type="nucleotide sequence ID" value="NM_001316924.1"/>
</dbReference>
<dbReference type="RefSeq" id="NP_057162.4">
    <property type="nucleotide sequence ID" value="NM_016078.6"/>
</dbReference>
<dbReference type="BioGRID" id="119236">
    <property type="interactions" value="30"/>
</dbReference>
<dbReference type="FunCoup" id="Q9NYZ1">
    <property type="interactions" value="2046"/>
</dbReference>
<dbReference type="IntAct" id="Q9NYZ1">
    <property type="interactions" value="27"/>
</dbReference>
<dbReference type="STRING" id="9606.ENSP00000305654"/>
<dbReference type="iPTMnet" id="Q9NYZ1"/>
<dbReference type="PhosphoSitePlus" id="Q9NYZ1"/>
<dbReference type="SwissPalm" id="Q9NYZ1"/>
<dbReference type="BioMuta" id="TVP23B"/>
<dbReference type="DMDM" id="296434501"/>
<dbReference type="jPOST" id="Q9NYZ1"/>
<dbReference type="MassIVE" id="Q9NYZ1"/>
<dbReference type="PaxDb" id="9606-ENSP00000305654"/>
<dbReference type="PeptideAtlas" id="Q9NYZ1"/>
<dbReference type="Pumba" id="Q9NYZ1"/>
<dbReference type="Antibodypedia" id="6796">
    <property type="antibodies" value="25 antibodies from 15 providers"/>
</dbReference>
<dbReference type="DNASU" id="51030"/>
<dbReference type="Ensembl" id="ENST00000307767.13">
    <property type="protein sequence ID" value="ENSP00000305654.8"/>
    <property type="gene ID" value="ENSG00000171928.14"/>
</dbReference>
<dbReference type="GeneID" id="51030"/>
<dbReference type="KEGG" id="hsa:51030"/>
<dbReference type="MANE-Select" id="ENST00000307767.13">
    <property type="protein sequence ID" value="ENSP00000305654.8"/>
    <property type="RefSeq nucleotide sequence ID" value="NM_016078.6"/>
    <property type="RefSeq protein sequence ID" value="NP_057162.4"/>
</dbReference>
<dbReference type="UCSC" id="uc002gum.3">
    <property type="organism name" value="human"/>
</dbReference>
<dbReference type="AGR" id="HGNC:20399"/>
<dbReference type="CTD" id="51030"/>
<dbReference type="DisGeNET" id="51030"/>
<dbReference type="GeneCards" id="TVP23B"/>
<dbReference type="HGNC" id="HGNC:20399">
    <property type="gene designation" value="TVP23B"/>
</dbReference>
<dbReference type="HPA" id="ENSG00000171928">
    <property type="expression patterns" value="Low tissue specificity"/>
</dbReference>
<dbReference type="neXtProt" id="NX_Q9NYZ1"/>
<dbReference type="OpenTargets" id="ENSG00000171928"/>
<dbReference type="PharmGKB" id="PA134871046"/>
<dbReference type="VEuPathDB" id="HostDB:ENSG00000171928"/>
<dbReference type="eggNOG" id="KOG3195">
    <property type="taxonomic scope" value="Eukaryota"/>
</dbReference>
<dbReference type="GeneTree" id="ENSGT00390000004428"/>
<dbReference type="InParanoid" id="Q9NYZ1"/>
<dbReference type="OMA" id="FEWMIVA"/>
<dbReference type="OrthoDB" id="2151161at2759"/>
<dbReference type="PAN-GO" id="Q9NYZ1">
    <property type="GO annotations" value="3 GO annotations based on evolutionary models"/>
</dbReference>
<dbReference type="PhylomeDB" id="Q9NYZ1"/>
<dbReference type="TreeFam" id="TF312906"/>
<dbReference type="PathwayCommons" id="Q9NYZ1"/>
<dbReference type="SignaLink" id="Q9NYZ1"/>
<dbReference type="BioGRID-ORCS" id="51030">
    <property type="hits" value="10 hits in 1054 CRISPR screens"/>
</dbReference>
<dbReference type="ChiTaRS" id="TVP23B">
    <property type="organism name" value="human"/>
</dbReference>
<dbReference type="GeneWiki" id="FAM18B1"/>
<dbReference type="GenomeRNAi" id="51030"/>
<dbReference type="Pharos" id="Q9NYZ1">
    <property type="development level" value="Tdark"/>
</dbReference>
<dbReference type="PRO" id="PR:Q9NYZ1"/>
<dbReference type="Proteomes" id="UP000005640">
    <property type="component" value="Chromosome 17"/>
</dbReference>
<dbReference type="RNAct" id="Q9NYZ1">
    <property type="molecule type" value="protein"/>
</dbReference>
<dbReference type="Bgee" id="ENSG00000171928">
    <property type="expression patterns" value="Expressed in islet of Langerhans and 106 other cell types or tissues"/>
</dbReference>
<dbReference type="ExpressionAtlas" id="Q9NYZ1">
    <property type="expression patterns" value="baseline and differential"/>
</dbReference>
<dbReference type="GO" id="GO:0000139">
    <property type="term" value="C:Golgi membrane"/>
    <property type="evidence" value="ECO:0000318"/>
    <property type="project" value="GO_Central"/>
</dbReference>
<dbReference type="GO" id="GO:0009306">
    <property type="term" value="P:protein secretion"/>
    <property type="evidence" value="ECO:0000318"/>
    <property type="project" value="GO_Central"/>
</dbReference>
<dbReference type="GO" id="GO:0016192">
    <property type="term" value="P:vesicle-mediated transport"/>
    <property type="evidence" value="ECO:0000318"/>
    <property type="project" value="GO_Central"/>
</dbReference>
<dbReference type="InterPro" id="IPR008564">
    <property type="entry name" value="TVP23-like"/>
</dbReference>
<dbReference type="PANTHER" id="PTHR13019">
    <property type="entry name" value="GOLGI APPARATUS MEMBRANE PROTEIN TVP23"/>
    <property type="match status" value="1"/>
</dbReference>
<dbReference type="PANTHER" id="PTHR13019:SF9">
    <property type="entry name" value="GOLGI APPARATUS MEMBRANE PROTEIN TVP23 HOMOLOG B"/>
    <property type="match status" value="1"/>
</dbReference>
<dbReference type="Pfam" id="PF05832">
    <property type="entry name" value="DUF846"/>
    <property type="match status" value="1"/>
</dbReference>
<organism>
    <name type="scientific">Homo sapiens</name>
    <name type="common">Human</name>
    <dbReference type="NCBI Taxonomy" id="9606"/>
    <lineage>
        <taxon>Eukaryota</taxon>
        <taxon>Metazoa</taxon>
        <taxon>Chordata</taxon>
        <taxon>Craniata</taxon>
        <taxon>Vertebrata</taxon>
        <taxon>Euteleostomi</taxon>
        <taxon>Mammalia</taxon>
        <taxon>Eutheria</taxon>
        <taxon>Euarchontoglires</taxon>
        <taxon>Primates</taxon>
        <taxon>Haplorrhini</taxon>
        <taxon>Catarrhini</taxon>
        <taxon>Hominidae</taxon>
        <taxon>Homo</taxon>
    </lineage>
</organism>
<protein>
    <recommendedName>
        <fullName>Golgi apparatus membrane protein TVP23 homolog B</fullName>
    </recommendedName>
</protein>